<evidence type="ECO:0000250" key="1">
    <source>
        <dbReference type="UniProtKB" id="Q9NP77"/>
    </source>
</evidence>
<evidence type="ECO:0000269" key="2">
    <source>
    </source>
</evidence>
<evidence type="ECO:0000269" key="3">
    <source>
    </source>
</evidence>
<evidence type="ECO:0000269" key="4">
    <source>
    </source>
</evidence>
<evidence type="ECO:0000305" key="5"/>
<evidence type="ECO:0000305" key="6">
    <source>
    </source>
</evidence>
<evidence type="ECO:0000305" key="7">
    <source>
    </source>
</evidence>
<evidence type="ECO:0000312" key="8">
    <source>
        <dbReference type="Proteomes" id="UP000001940"/>
    </source>
</evidence>
<evidence type="ECO:0000312" key="9">
    <source>
        <dbReference type="WormBase" id="T13C2.4"/>
    </source>
</evidence>
<protein>
    <recommendedName>
        <fullName evidence="5">RNA polymerase II subunit A C-terminal domain phosphatase ssup-72</fullName>
        <shortName evidence="1">CTD phosphatase ssup-72</shortName>
        <ecNumber evidence="2">3.1.3.16</ecNumber>
    </recommendedName>
</protein>
<gene>
    <name evidence="9" type="primary">ssup-72</name>
    <name evidence="9" type="ORF">T13C2.4</name>
</gene>
<proteinExistence type="evidence at protein level"/>
<comment type="function">
    <text evidence="2 3">Protein phosphatase that dephosphorylates 'Ser-5' of the heptad repeats YSPTSPS in the C-terminal domain of the large RNA polymerase II subunit ama-1 (PubMed:26588990). By regulating the phosphorylation status of ama-1 and thus ama-1 binding to specific polyadenylation sites, regulates alternative polyadenylation of pre-mRNAs, including unc-44 and dlk-1 mRNAs (PubMed:26588990, PubMed:28087624). This results in the tissue-specific expression of unc-44 isoforms (PubMed:28087624).</text>
</comment>
<comment type="catalytic activity">
    <reaction evidence="2">
        <text>O-phospho-L-seryl-[protein] + H2O = L-seryl-[protein] + phosphate</text>
        <dbReference type="Rhea" id="RHEA:20629"/>
        <dbReference type="Rhea" id="RHEA-COMP:9863"/>
        <dbReference type="Rhea" id="RHEA-COMP:11604"/>
        <dbReference type="ChEBI" id="CHEBI:15377"/>
        <dbReference type="ChEBI" id="CHEBI:29999"/>
        <dbReference type="ChEBI" id="CHEBI:43474"/>
        <dbReference type="ChEBI" id="CHEBI:83421"/>
        <dbReference type="EC" id="3.1.3.16"/>
    </reaction>
</comment>
<comment type="catalytic activity">
    <reaction evidence="1">
        <text>O-phospho-L-threonyl-[protein] + H2O = L-threonyl-[protein] + phosphate</text>
        <dbReference type="Rhea" id="RHEA:47004"/>
        <dbReference type="Rhea" id="RHEA-COMP:11060"/>
        <dbReference type="Rhea" id="RHEA-COMP:11605"/>
        <dbReference type="ChEBI" id="CHEBI:15377"/>
        <dbReference type="ChEBI" id="CHEBI:30013"/>
        <dbReference type="ChEBI" id="CHEBI:43474"/>
        <dbReference type="ChEBI" id="CHEBI:61977"/>
        <dbReference type="EC" id="3.1.3.16"/>
    </reaction>
</comment>
<comment type="subunit">
    <text evidence="2 7">May interact with synd-1 (via C-terminus); the interaction may prevent ssup-72 binding to RNA polymerase II ama-1 (PubMed:26588990). May interact with RNA polymerase II ama-1 (Probable).</text>
</comment>
<comment type="subcellular location">
    <subcellularLocation>
        <location evidence="2">Nucleus</location>
    </subcellularLocation>
</comment>
<comment type="tissue specificity">
    <text evidence="2">Expressed in epidermis, intestine and nervous system.</text>
</comment>
<comment type="developmental stage">
    <text evidence="2">Expressed in embryos, larvae and adults.</text>
</comment>
<comment type="PTM">
    <text evidence="6">May be phosphorylated by kin-20.</text>
</comment>
<comment type="similarity">
    <text evidence="5">Belongs to the SSU72 phosphatase family.</text>
</comment>
<accession>Q22453</accession>
<dbReference type="EC" id="3.1.3.16" evidence="2"/>
<dbReference type="EMBL" id="BX284602">
    <property type="protein sequence ID" value="CCD70326.1"/>
    <property type="molecule type" value="Genomic_DNA"/>
</dbReference>
<dbReference type="RefSeq" id="NP_495386.3">
    <property type="nucleotide sequence ID" value="NM_062985.7"/>
</dbReference>
<dbReference type="SMR" id="Q22453"/>
<dbReference type="FunCoup" id="Q22453">
    <property type="interactions" value="2946"/>
</dbReference>
<dbReference type="STRING" id="6239.T13C2.4.1"/>
<dbReference type="iPTMnet" id="Q22453"/>
<dbReference type="PaxDb" id="6239-T13C2.4"/>
<dbReference type="PeptideAtlas" id="Q22453"/>
<dbReference type="EnsemblMetazoa" id="T13C2.4.1">
    <property type="protein sequence ID" value="T13C2.4.1"/>
    <property type="gene ID" value="WBGene00020480"/>
</dbReference>
<dbReference type="EnsemblMetazoa" id="T13C2.4.2">
    <property type="protein sequence ID" value="T13C2.4.2"/>
    <property type="gene ID" value="WBGene00020480"/>
</dbReference>
<dbReference type="GeneID" id="188472"/>
<dbReference type="KEGG" id="cel:CELE_T13C2.4"/>
<dbReference type="UCSC" id="T13C2.4">
    <property type="organism name" value="c. elegans"/>
</dbReference>
<dbReference type="AGR" id="WB:WBGene00020480"/>
<dbReference type="CTD" id="188472"/>
<dbReference type="WormBase" id="T13C2.4">
    <property type="protein sequence ID" value="CE39774"/>
    <property type="gene ID" value="WBGene00020480"/>
    <property type="gene designation" value="ssup-72"/>
</dbReference>
<dbReference type="eggNOG" id="KOG2424">
    <property type="taxonomic scope" value="Eukaryota"/>
</dbReference>
<dbReference type="GeneTree" id="ENSGT00390000010165"/>
<dbReference type="HOGENOM" id="CLU_062463_2_1_1"/>
<dbReference type="InParanoid" id="Q22453"/>
<dbReference type="OMA" id="PNCYEFG"/>
<dbReference type="OrthoDB" id="57957at2759"/>
<dbReference type="PhylomeDB" id="Q22453"/>
<dbReference type="Reactome" id="R-CEL-6807505">
    <property type="pathway name" value="RNA polymerase II transcribes snRNA genes"/>
</dbReference>
<dbReference type="PRO" id="PR:Q22453"/>
<dbReference type="Proteomes" id="UP000001940">
    <property type="component" value="Chromosome II"/>
</dbReference>
<dbReference type="Bgee" id="WBGene00020480">
    <property type="expression patterns" value="Expressed in embryo and 3 other cell types or tissues"/>
</dbReference>
<dbReference type="GO" id="GO:0005847">
    <property type="term" value="C:mRNA cleavage and polyadenylation specificity factor complex"/>
    <property type="evidence" value="ECO:0000318"/>
    <property type="project" value="GO_Central"/>
</dbReference>
<dbReference type="GO" id="GO:0008420">
    <property type="term" value="F:RNA polymerase II CTD heptapeptide repeat phosphatase activity"/>
    <property type="evidence" value="ECO:0000318"/>
    <property type="project" value="GO_Central"/>
</dbReference>
<dbReference type="GO" id="GO:0006397">
    <property type="term" value="P:mRNA processing"/>
    <property type="evidence" value="ECO:0007669"/>
    <property type="project" value="UniProtKB-KW"/>
</dbReference>
<dbReference type="GO" id="GO:0040012">
    <property type="term" value="P:regulation of locomotion"/>
    <property type="evidence" value="ECO:0000316"/>
    <property type="project" value="UniProtKB"/>
</dbReference>
<dbReference type="GO" id="GO:0006369">
    <property type="term" value="P:termination of RNA polymerase II transcription"/>
    <property type="evidence" value="ECO:0000318"/>
    <property type="project" value="GO_Central"/>
</dbReference>
<dbReference type="FunFam" id="3.40.50.2300:FF:000405">
    <property type="entry name" value="RNA polymerase II subunit A C-terminal domain phosphatase"/>
    <property type="match status" value="1"/>
</dbReference>
<dbReference type="FunFam" id="3.40.50.2300:FF:000066">
    <property type="entry name" value="RNA polymerase II subunit A C-terminal domain phosphatase SSU72"/>
    <property type="match status" value="1"/>
</dbReference>
<dbReference type="Gene3D" id="3.40.50.2300">
    <property type="match status" value="2"/>
</dbReference>
<dbReference type="InterPro" id="IPR006811">
    <property type="entry name" value="RNA_pol_II_suA"/>
</dbReference>
<dbReference type="PANTHER" id="PTHR20383">
    <property type="entry name" value="RNA POLYMERASE II SUBUNIT A C-TERMINAL DOMAIN PHOSPHATASE"/>
    <property type="match status" value="1"/>
</dbReference>
<dbReference type="Pfam" id="PF04722">
    <property type="entry name" value="Ssu72"/>
    <property type="match status" value="1"/>
</dbReference>
<reference evidence="8" key="1">
    <citation type="journal article" date="1998" name="Science">
        <title>Genome sequence of the nematode C. elegans: a platform for investigating biology.</title>
        <authorList>
            <consortium name="The C. elegans sequencing consortium"/>
        </authorList>
    </citation>
    <scope>NUCLEOTIDE SEQUENCE [LARGE SCALE GENOMIC DNA]</scope>
    <source>
        <strain evidence="8">Bristol N2</strain>
    </source>
</reference>
<reference evidence="5" key="2">
    <citation type="journal article" date="2015" name="Genes Dev.">
        <title>Context-dependent modulation of Pol II CTD phosphatase SSUP-72 regulates alternative polyadenylation in neuronal development.</title>
        <authorList>
            <person name="Chen F."/>
            <person name="Zhou Y."/>
            <person name="Qi Y.B."/>
            <person name="Khivansara V."/>
            <person name="Li H."/>
            <person name="Chun S.Y."/>
            <person name="Kim J.K."/>
            <person name="Fu X.D."/>
            <person name="Jin Y."/>
        </authorList>
    </citation>
    <scope>FUNCTION</scope>
    <scope>CATALYTIC ACTIVITY</scope>
    <scope>INTERACTION WITH SYDN-1 AND AMA-1</scope>
    <scope>SUBCELLULAR LOCATION</scope>
    <scope>TISSUE SPECIFICITY</scope>
    <scope>DEVELOPMENTAL STAGE</scope>
    <scope>MUTAGENESIS OF CYS-13; GLY-47 AND ASP-145</scope>
</reference>
<reference evidence="5" key="3">
    <citation type="journal article" date="2017" name="Development">
        <title>Tissue-specific regulation of alternative polyadenylation represses expression of a neuronal ankyrin isoform in C. elegans epidermal development.</title>
        <authorList>
            <person name="Chen F."/>
            <person name="Chisholm A.D."/>
            <person name="Jin Y."/>
        </authorList>
    </citation>
    <scope>FUNCTION</scope>
    <scope>MUTAGENESIS OF GLY-47</scope>
</reference>
<reference key="4">
    <citation type="journal article" date="2020" name="Dev. Cell">
        <title>Casein Kinase 1delta Stabilizes Mature Axons by Inhibiting Transcription Termination of Ankyrin.</title>
        <authorList>
            <person name="LaBella M.L."/>
            <person name="Hujber E.J."/>
            <person name="Moore K.A."/>
            <person name="Rawson R.L."/>
            <person name="Merrill S.A."/>
            <person name="Allaire P.D."/>
            <person name="Ailion M."/>
            <person name="Hollien J."/>
            <person name="Bastiani M.J."/>
            <person name="Jorgensen E.M."/>
        </authorList>
    </citation>
    <scope>PHOSPHORYLATION AT SER-39</scope>
    <scope>MUTAGENESIS OF SER-39</scope>
</reference>
<name>SSU72_CAEEL</name>
<keyword id="KW-0378">Hydrolase</keyword>
<keyword id="KW-0507">mRNA processing</keyword>
<keyword id="KW-0539">Nucleus</keyword>
<keyword id="KW-0597">Phosphoprotein</keyword>
<keyword id="KW-0904">Protein phosphatase</keyword>
<keyword id="KW-1185">Reference proteome</keyword>
<sequence length="197" mass="22775">MEYSSKLRFAVSCSSNMNRSMEAHGILKKRGFNIESYGSGNQVKMPGPTVDKPNCYEFGPTTYEDIYADLTNKDLHLYTQNGLLHMVDRNRRIKSRPQRFQAETREFDIVLCLEERVFDQVVDFLNRSVGKSGNPVHVINIDIEDNAEEATFGAFFVADLCEKLERSEDFEEDIDQIITDLEENNPKRNLLHTICFY</sequence>
<organism evidence="8">
    <name type="scientific">Caenorhabditis elegans</name>
    <dbReference type="NCBI Taxonomy" id="6239"/>
    <lineage>
        <taxon>Eukaryota</taxon>
        <taxon>Metazoa</taxon>
        <taxon>Ecdysozoa</taxon>
        <taxon>Nematoda</taxon>
        <taxon>Chromadorea</taxon>
        <taxon>Rhabditida</taxon>
        <taxon>Rhabditina</taxon>
        <taxon>Rhabditomorpha</taxon>
        <taxon>Rhabditoidea</taxon>
        <taxon>Rhabditidae</taxon>
        <taxon>Peloderinae</taxon>
        <taxon>Caenorhabditis</taxon>
    </lineage>
</organism>
<feature type="chain" id="PRO_0000447207" description="RNA polymerase II subunit A C-terminal domain phosphatase ssup-72">
    <location>
        <begin position="1"/>
        <end position="197"/>
    </location>
</feature>
<feature type="modified residue" description="Phosphoserine" evidence="6">
    <location>
        <position position="39"/>
    </location>
</feature>
<feature type="mutagenesis site" description="No obvious phenotype. Fails to suppress abnormal synapse and axon formation in a sydn-1 and syd-2 mutant background." evidence="2">
    <original>C</original>
    <variation>S</variation>
    <location>
        <position position="13"/>
    </location>
</feature>
<feature type="mutagenesis site" description="Does not suppress the locomotion defect of the kin-20 ox423 mutant." evidence="4">
    <original>S</original>
    <variation>A</variation>
    <location>
        <position position="39"/>
    </location>
</feature>
<feature type="mutagenesis site" description="Suppresses the locomotion defect of the kin-20 ox423 mutant." evidence="4">
    <original>S</original>
    <variation>F</variation>
    <variation>E</variation>
    <location>
        <position position="39"/>
    </location>
</feature>
<feature type="mutagenesis site" description="In ju924; increases ama-1 'Ser-5' phosphorylation, alters usage of internal polyadenylation sites (PAS) in unc-44 and dlk-1 pre-mRNAs. Restores ama-1 binding to neuron-specific PASs, expression of unc-44 in neurons and vulva, and suppresses abnormal synapse and axon formation in a sydn-1 (ju541) mutant background." evidence="2 3">
    <original>G</original>
    <variation>E</variation>
    <location>
        <position position="47"/>
    </location>
</feature>
<feature type="mutagenesis site" description="No obvious phenotype. Fails to suppress abnormal synapse and axon formation in a sydn-1 and syd-2 mutant background." evidence="2">
    <original>D</original>
    <variation>A</variation>
    <location>
        <position position="145"/>
    </location>
</feature>